<evidence type="ECO:0000255" key="1">
    <source>
        <dbReference type="HAMAP-Rule" id="MF_00275"/>
    </source>
</evidence>
<gene>
    <name evidence="1" type="primary">kdpA</name>
    <name type="ordered locus">FP1692</name>
</gene>
<comment type="function">
    <text evidence="1">Part of the high-affinity ATP-driven potassium transport (or Kdp) system, which catalyzes the hydrolysis of ATP coupled with the electrogenic transport of potassium into the cytoplasm. This subunit binds the periplasmic potassium ions and delivers the ions to the membrane domain of KdpB through an intramembrane tunnel.</text>
</comment>
<comment type="subunit">
    <text evidence="1">The system is composed of three essential subunits: KdpA, KdpB and KdpC.</text>
</comment>
<comment type="subcellular location">
    <subcellularLocation>
        <location evidence="1">Cell inner membrane</location>
        <topology evidence="1">Multi-pass membrane protein</topology>
    </subcellularLocation>
</comment>
<comment type="similarity">
    <text evidence="1">Belongs to the KdpA family.</text>
</comment>
<protein>
    <recommendedName>
        <fullName evidence="1">Potassium-transporting ATPase potassium-binding subunit</fullName>
    </recommendedName>
    <alternativeName>
        <fullName evidence="1">ATP phosphohydrolase [potassium-transporting] A chain</fullName>
    </alternativeName>
    <alternativeName>
        <fullName evidence="1">Potassium-binding and translocating subunit A</fullName>
    </alternativeName>
    <alternativeName>
        <fullName evidence="1">Potassium-translocating ATPase A chain</fullName>
    </alternativeName>
</protein>
<organism>
    <name type="scientific">Flavobacterium psychrophilum (strain ATCC 49511 / DSM 21280 / CIP 103535 / JIP02/86)</name>
    <dbReference type="NCBI Taxonomy" id="402612"/>
    <lineage>
        <taxon>Bacteria</taxon>
        <taxon>Pseudomonadati</taxon>
        <taxon>Bacteroidota</taxon>
        <taxon>Flavobacteriia</taxon>
        <taxon>Flavobacteriales</taxon>
        <taxon>Flavobacteriaceae</taxon>
        <taxon>Flavobacterium</taxon>
    </lineage>
</organism>
<dbReference type="EMBL" id="AM398681">
    <property type="protein sequence ID" value="CAL43759.1"/>
    <property type="molecule type" value="Genomic_DNA"/>
</dbReference>
<dbReference type="RefSeq" id="WP_011963802.1">
    <property type="nucleotide sequence ID" value="NC_009613.3"/>
</dbReference>
<dbReference type="RefSeq" id="YP_001296566.1">
    <property type="nucleotide sequence ID" value="NC_009613.3"/>
</dbReference>
<dbReference type="SMR" id="A6H086"/>
<dbReference type="STRING" id="402612.FP1692"/>
<dbReference type="EnsemblBacteria" id="CAL43759">
    <property type="protein sequence ID" value="CAL43759"/>
    <property type="gene ID" value="FP1692"/>
</dbReference>
<dbReference type="GeneID" id="66552121"/>
<dbReference type="KEGG" id="fps:FP1692"/>
<dbReference type="PATRIC" id="fig|402612.5.peg.1706"/>
<dbReference type="eggNOG" id="COG2060">
    <property type="taxonomic scope" value="Bacteria"/>
</dbReference>
<dbReference type="HOGENOM" id="CLU_018614_3_0_10"/>
<dbReference type="OrthoDB" id="9763796at2"/>
<dbReference type="Proteomes" id="UP000006394">
    <property type="component" value="Chromosome"/>
</dbReference>
<dbReference type="GO" id="GO:0005886">
    <property type="term" value="C:plasma membrane"/>
    <property type="evidence" value="ECO:0007669"/>
    <property type="project" value="UniProtKB-SubCell"/>
</dbReference>
<dbReference type="GO" id="GO:0008556">
    <property type="term" value="F:P-type potassium transmembrane transporter activity"/>
    <property type="evidence" value="ECO:0007669"/>
    <property type="project" value="InterPro"/>
</dbReference>
<dbReference type="GO" id="GO:0030955">
    <property type="term" value="F:potassium ion binding"/>
    <property type="evidence" value="ECO:0007669"/>
    <property type="project" value="UniProtKB-UniRule"/>
</dbReference>
<dbReference type="HAMAP" id="MF_00275">
    <property type="entry name" value="KdpA"/>
    <property type="match status" value="1"/>
</dbReference>
<dbReference type="InterPro" id="IPR004623">
    <property type="entry name" value="KdpA"/>
</dbReference>
<dbReference type="NCBIfam" id="TIGR00680">
    <property type="entry name" value="kdpA"/>
    <property type="match status" value="1"/>
</dbReference>
<dbReference type="PANTHER" id="PTHR30607">
    <property type="entry name" value="POTASSIUM-TRANSPORTING ATPASE A CHAIN"/>
    <property type="match status" value="1"/>
</dbReference>
<dbReference type="PANTHER" id="PTHR30607:SF2">
    <property type="entry name" value="POTASSIUM-TRANSPORTING ATPASE POTASSIUM-BINDING SUBUNIT"/>
    <property type="match status" value="1"/>
</dbReference>
<dbReference type="Pfam" id="PF03814">
    <property type="entry name" value="KdpA"/>
    <property type="match status" value="1"/>
</dbReference>
<dbReference type="PIRSF" id="PIRSF001294">
    <property type="entry name" value="K_ATPaseA"/>
    <property type="match status" value="1"/>
</dbReference>
<keyword id="KW-0997">Cell inner membrane</keyword>
<keyword id="KW-1003">Cell membrane</keyword>
<keyword id="KW-0406">Ion transport</keyword>
<keyword id="KW-0472">Membrane</keyword>
<keyword id="KW-0630">Potassium</keyword>
<keyword id="KW-0633">Potassium transport</keyword>
<keyword id="KW-1185">Reference proteome</keyword>
<keyword id="KW-0812">Transmembrane</keyword>
<keyword id="KW-1133">Transmembrane helix</keyword>
<keyword id="KW-0813">Transport</keyword>
<reference key="1">
    <citation type="journal article" date="2007" name="Nat. Biotechnol.">
        <title>Complete genome sequence of the fish pathogen Flavobacterium psychrophilum.</title>
        <authorList>
            <person name="Duchaud E."/>
            <person name="Boussaha M."/>
            <person name="Loux V."/>
            <person name="Bernardet J.-F."/>
            <person name="Michel C."/>
            <person name="Kerouault B."/>
            <person name="Mondot S."/>
            <person name="Nicolas P."/>
            <person name="Bossy R."/>
            <person name="Caron C."/>
            <person name="Bessieres P."/>
            <person name="Gibrat J.-F."/>
            <person name="Claverol S."/>
            <person name="Dumetz F."/>
            <person name="Le Henaff M."/>
            <person name="Benmansour A."/>
        </authorList>
    </citation>
    <scope>NUCLEOTIDE SEQUENCE [LARGE SCALE GENOMIC DNA]</scope>
    <source>
        <strain>ATCC 49511 / DSM 21280 / CIP 103535 / JIP02/86</strain>
    </source>
</reference>
<accession>A6H086</accession>
<feature type="chain" id="PRO_1000114683" description="Potassium-transporting ATPase potassium-binding subunit">
    <location>
        <begin position="1"/>
        <end position="573"/>
    </location>
</feature>
<feature type="transmembrane region" description="Helical" evidence="1">
    <location>
        <begin position="3"/>
        <end position="23"/>
    </location>
</feature>
<feature type="transmembrane region" description="Helical" evidence="1">
    <location>
        <begin position="72"/>
        <end position="92"/>
    </location>
</feature>
<feature type="transmembrane region" description="Helical" evidence="1">
    <location>
        <begin position="134"/>
        <end position="154"/>
    </location>
</feature>
<feature type="transmembrane region" description="Helical" evidence="1">
    <location>
        <begin position="179"/>
        <end position="199"/>
    </location>
</feature>
<feature type="transmembrane region" description="Helical" evidence="1">
    <location>
        <begin position="256"/>
        <end position="276"/>
    </location>
</feature>
<feature type="transmembrane region" description="Helical" evidence="1">
    <location>
        <begin position="282"/>
        <end position="302"/>
    </location>
</feature>
<feature type="transmembrane region" description="Helical" evidence="1">
    <location>
        <begin position="380"/>
        <end position="400"/>
    </location>
</feature>
<feature type="transmembrane region" description="Helical" evidence="1">
    <location>
        <begin position="418"/>
        <end position="438"/>
    </location>
</feature>
<feature type="transmembrane region" description="Helical" evidence="1">
    <location>
        <begin position="501"/>
        <end position="521"/>
    </location>
</feature>
<feature type="transmembrane region" description="Helical" evidence="1">
    <location>
        <begin position="540"/>
        <end position="560"/>
    </location>
</feature>
<proteinExistence type="inferred from homology"/>
<sequence length="573" mass="62176">MNTELFGVISIFIVSIVLAIPLGRYIAKIYSNDKTLLDPIFNPIEKFIFKISGINATEVMNWKQHLKALLSINMVWFFLCFFILLFQGSLFLNPDNNPSMPPDLAFNTAISFLVNCNLQHYSGESGVSYLSQLFLMFLQFVSAGVGMAAAAMVFTAMKERTTDKLGNFYNFFIKSCTRILLPLSVIVAVALLFSGTPMTFEGKDTITTLQGDTVEISRGPAAAFIAIKHIGTNGGGFFGANSAHPLENPTYFTNAVELWAQLIIPFAMIFALGFYLKKRKFSYVIFGVMTVGFLLLVIPTVISELNGNPAIERMGITQATGAMEGKEVRFGPAVTGFWSIATTVISTGSVNSMHDSSMPVSGSMELLAMMINAFYGGCGVGILNFYIFIILAVFISGLMVGRTPEFLGKKIEAREVKIAAFIAILHPLLILSGTALASYFAANDTAMGYWFSGNATGWLNNPGHHGFSEMLYEYTSSAANNGSGFEGLADNNPFWNITTGIVLLLSRFLPIIGPLAIAGLLANKKYIPESAGTLKTDTTIFGVMVFAVIAIIAALSFFPALALGPLAEYFTLK</sequence>
<name>KDPA_FLAPJ</name>